<sequence length="525" mass="58752">METIIIALIAFIIGIIAIPIVLFAWIYIKDEKQQEHSILRNYPVIGRFRYILEKIGPELRQYLYSNDNEEQPFSRKEYEQTVISGKYKSRMMGFGSVRDFDKPGYYIRNAMFPKQREEMHVNQTPKIETQIYKMDADNLFKRKEHAEHIKADPYFLHPDDVQVIGEHTCEKPFYVKGLVGQSAMSYGSLGERAVTALSKGLHLAGGTWMNTGEGGLSEYHLKGGADIICQIGPGLFGVRKRNGEFSWEEFKRKSRIDQIKAFELKLAQGAKTRGGHVDGAKVSEEVADIRNVEPGKSIDSPNRFYEFSNPPEMLDFIEKLRDVGQKPVGIKLVAGHPEELHELFSHMQKSGKHPDFITIDGSEGGTGASFYELADTVGLPIMTALPIVDTLLKQYGLRSQLKIFASGKLLTPDKIAVALALGADFVNIARGMMFSVGCIRALVCHTNTCPAGVATTDPKLQKALSVEEKQHRVCNYVISLREGLFNLAAAAGINSPIHFSKEHVVYRKEDGSIINIDNLIHQFVS</sequence>
<keyword id="KW-1003">Cell membrane</keyword>
<keyword id="KW-0472">Membrane</keyword>
<keyword id="KW-1185">Reference proteome</keyword>
<keyword id="KW-0812">Transmembrane</keyword>
<keyword id="KW-1133">Transmembrane helix</keyword>
<protein>
    <recommendedName>
        <fullName>Glutamate synthase large subunit-like protein YerD</fullName>
    </recommendedName>
</protein>
<reference key="1">
    <citation type="journal article" date="1998" name="Mol. Microbiol.">
        <title>PcrA is an essential DNA helicase of Bacillus subtilis fulfilling functions both in repair and rolling-circle replication.</title>
        <authorList>
            <person name="Petit M.-A."/>
            <person name="Dervyn E."/>
            <person name="Rose M."/>
            <person name="Entian K.-D."/>
            <person name="McGovern S."/>
            <person name="Ehrlich S.D."/>
            <person name="Bruand C."/>
        </authorList>
    </citation>
    <scope>NUCLEOTIDE SEQUENCE [GENOMIC DNA]</scope>
    <source>
        <strain>168</strain>
    </source>
</reference>
<reference key="2">
    <citation type="journal article" date="1997" name="Nature">
        <title>The complete genome sequence of the Gram-positive bacterium Bacillus subtilis.</title>
        <authorList>
            <person name="Kunst F."/>
            <person name="Ogasawara N."/>
            <person name="Moszer I."/>
            <person name="Albertini A.M."/>
            <person name="Alloni G."/>
            <person name="Azevedo V."/>
            <person name="Bertero M.G."/>
            <person name="Bessieres P."/>
            <person name="Bolotin A."/>
            <person name="Borchert S."/>
            <person name="Borriss R."/>
            <person name="Boursier L."/>
            <person name="Brans A."/>
            <person name="Braun M."/>
            <person name="Brignell S.C."/>
            <person name="Bron S."/>
            <person name="Brouillet S."/>
            <person name="Bruschi C.V."/>
            <person name="Caldwell B."/>
            <person name="Capuano V."/>
            <person name="Carter N.M."/>
            <person name="Choi S.-K."/>
            <person name="Codani J.-J."/>
            <person name="Connerton I.F."/>
            <person name="Cummings N.J."/>
            <person name="Daniel R.A."/>
            <person name="Denizot F."/>
            <person name="Devine K.M."/>
            <person name="Duesterhoeft A."/>
            <person name="Ehrlich S.D."/>
            <person name="Emmerson P.T."/>
            <person name="Entian K.-D."/>
            <person name="Errington J."/>
            <person name="Fabret C."/>
            <person name="Ferrari E."/>
            <person name="Foulger D."/>
            <person name="Fritz C."/>
            <person name="Fujita M."/>
            <person name="Fujita Y."/>
            <person name="Fuma S."/>
            <person name="Galizzi A."/>
            <person name="Galleron N."/>
            <person name="Ghim S.-Y."/>
            <person name="Glaser P."/>
            <person name="Goffeau A."/>
            <person name="Golightly E.J."/>
            <person name="Grandi G."/>
            <person name="Guiseppi G."/>
            <person name="Guy B.J."/>
            <person name="Haga K."/>
            <person name="Haiech J."/>
            <person name="Harwood C.R."/>
            <person name="Henaut A."/>
            <person name="Hilbert H."/>
            <person name="Holsappel S."/>
            <person name="Hosono S."/>
            <person name="Hullo M.-F."/>
            <person name="Itaya M."/>
            <person name="Jones L.-M."/>
            <person name="Joris B."/>
            <person name="Karamata D."/>
            <person name="Kasahara Y."/>
            <person name="Klaerr-Blanchard M."/>
            <person name="Klein C."/>
            <person name="Kobayashi Y."/>
            <person name="Koetter P."/>
            <person name="Koningstein G."/>
            <person name="Krogh S."/>
            <person name="Kumano M."/>
            <person name="Kurita K."/>
            <person name="Lapidus A."/>
            <person name="Lardinois S."/>
            <person name="Lauber J."/>
            <person name="Lazarevic V."/>
            <person name="Lee S.-M."/>
            <person name="Levine A."/>
            <person name="Liu H."/>
            <person name="Masuda S."/>
            <person name="Mauel C."/>
            <person name="Medigue C."/>
            <person name="Medina N."/>
            <person name="Mellado R.P."/>
            <person name="Mizuno M."/>
            <person name="Moestl D."/>
            <person name="Nakai S."/>
            <person name="Noback M."/>
            <person name="Noone D."/>
            <person name="O'Reilly M."/>
            <person name="Ogawa K."/>
            <person name="Ogiwara A."/>
            <person name="Oudega B."/>
            <person name="Park S.-H."/>
            <person name="Parro V."/>
            <person name="Pohl T.M."/>
            <person name="Portetelle D."/>
            <person name="Porwollik S."/>
            <person name="Prescott A.M."/>
            <person name="Presecan E."/>
            <person name="Pujic P."/>
            <person name="Purnelle B."/>
            <person name="Rapoport G."/>
            <person name="Rey M."/>
            <person name="Reynolds S."/>
            <person name="Rieger M."/>
            <person name="Rivolta C."/>
            <person name="Rocha E."/>
            <person name="Roche B."/>
            <person name="Rose M."/>
            <person name="Sadaie Y."/>
            <person name="Sato T."/>
            <person name="Scanlan E."/>
            <person name="Schleich S."/>
            <person name="Schroeter R."/>
            <person name="Scoffone F."/>
            <person name="Sekiguchi J."/>
            <person name="Sekowska A."/>
            <person name="Seror S.J."/>
            <person name="Serror P."/>
            <person name="Shin B.-S."/>
            <person name="Soldo B."/>
            <person name="Sorokin A."/>
            <person name="Tacconi E."/>
            <person name="Takagi T."/>
            <person name="Takahashi H."/>
            <person name="Takemaru K."/>
            <person name="Takeuchi M."/>
            <person name="Tamakoshi A."/>
            <person name="Tanaka T."/>
            <person name="Terpstra P."/>
            <person name="Tognoni A."/>
            <person name="Tosato V."/>
            <person name="Uchiyama S."/>
            <person name="Vandenbol M."/>
            <person name="Vannier F."/>
            <person name="Vassarotti A."/>
            <person name="Viari A."/>
            <person name="Wambutt R."/>
            <person name="Wedler E."/>
            <person name="Wedler H."/>
            <person name="Weitzenegger T."/>
            <person name="Winters P."/>
            <person name="Wipat A."/>
            <person name="Yamamoto H."/>
            <person name="Yamane K."/>
            <person name="Yasumoto K."/>
            <person name="Yata K."/>
            <person name="Yoshida K."/>
            <person name="Yoshikawa H.-F."/>
            <person name="Zumstein E."/>
            <person name="Yoshikawa H."/>
            <person name="Danchin A."/>
        </authorList>
    </citation>
    <scope>NUCLEOTIDE SEQUENCE [LARGE SCALE GENOMIC DNA]</scope>
    <source>
        <strain>168</strain>
    </source>
</reference>
<reference key="3">
    <citation type="journal article" date="1996" name="Microbiology">
        <title>The 52 degrees-55 degrees segment of the Bacillus subtilis chromosome: a region devoted to purine uptake and metabolism, and containing the genes cotA, gabP and guaA and the pur gene cluster within a 34960 bp nucleotide sequence.</title>
        <authorList>
            <person name="Borriss R."/>
            <person name="Porwollik S."/>
            <person name="Schroeter R."/>
        </authorList>
    </citation>
    <scope>NUCLEOTIDE SEQUENCE [GENOMIC DNA] OF 317-525</scope>
    <source>
        <strain>168</strain>
    </source>
</reference>
<accession>O34849</accession>
<accession>O30568</accession>
<accession>Q799E7</accession>
<proteinExistence type="inferred from homology"/>
<dbReference type="EMBL" id="Y15254">
    <property type="protein sequence ID" value="CAA75550.1"/>
    <property type="molecule type" value="Genomic_DNA"/>
</dbReference>
<dbReference type="EMBL" id="AL009126">
    <property type="protein sequence ID" value="CAB12479.1"/>
    <property type="molecule type" value="Genomic_DNA"/>
</dbReference>
<dbReference type="EMBL" id="AF011544">
    <property type="protein sequence ID" value="AAB72191.1"/>
    <property type="molecule type" value="Genomic_DNA"/>
</dbReference>
<dbReference type="PIR" id="C69794">
    <property type="entry name" value="C69794"/>
</dbReference>
<dbReference type="RefSeq" id="NP_388541.1">
    <property type="nucleotide sequence ID" value="NC_000964.3"/>
</dbReference>
<dbReference type="RefSeq" id="WP_003233925.1">
    <property type="nucleotide sequence ID" value="NZ_OZ025638.1"/>
</dbReference>
<dbReference type="SMR" id="O34849"/>
<dbReference type="FunCoup" id="O34849">
    <property type="interactions" value="55"/>
</dbReference>
<dbReference type="STRING" id="224308.BSU06590"/>
<dbReference type="PaxDb" id="224308-BSU06590"/>
<dbReference type="EnsemblBacteria" id="CAB12479">
    <property type="protein sequence ID" value="CAB12479"/>
    <property type="gene ID" value="BSU_06590"/>
</dbReference>
<dbReference type="GeneID" id="936058"/>
<dbReference type="KEGG" id="bsu:BSU06590"/>
<dbReference type="PATRIC" id="fig|224308.179.peg.716"/>
<dbReference type="eggNOG" id="COG0069">
    <property type="taxonomic scope" value="Bacteria"/>
</dbReference>
<dbReference type="InParanoid" id="O34849"/>
<dbReference type="OrthoDB" id="9758182at2"/>
<dbReference type="PhylomeDB" id="O34849"/>
<dbReference type="BioCyc" id="BSUB:BSU06590-MONOMER"/>
<dbReference type="Proteomes" id="UP000001570">
    <property type="component" value="Chromosome"/>
</dbReference>
<dbReference type="GO" id="GO:0005886">
    <property type="term" value="C:plasma membrane"/>
    <property type="evidence" value="ECO:0007669"/>
    <property type="project" value="UniProtKB-SubCell"/>
</dbReference>
<dbReference type="GO" id="GO:0015930">
    <property type="term" value="F:glutamate synthase activity"/>
    <property type="evidence" value="ECO:0007669"/>
    <property type="project" value="InterPro"/>
</dbReference>
<dbReference type="GO" id="GO:0006537">
    <property type="term" value="P:glutamate biosynthetic process"/>
    <property type="evidence" value="ECO:0007669"/>
    <property type="project" value="InterPro"/>
</dbReference>
<dbReference type="CDD" id="cd02808">
    <property type="entry name" value="GltS_FMN"/>
    <property type="match status" value="1"/>
</dbReference>
<dbReference type="FunFam" id="3.20.20.70:FF:000156">
    <property type="entry name" value="Glutamate synthase domain protein"/>
    <property type="match status" value="1"/>
</dbReference>
<dbReference type="Gene3D" id="3.20.20.70">
    <property type="entry name" value="Aldolase class I"/>
    <property type="match status" value="1"/>
</dbReference>
<dbReference type="InterPro" id="IPR013785">
    <property type="entry name" value="Aldolase_TIM"/>
</dbReference>
<dbReference type="InterPro" id="IPR024188">
    <property type="entry name" value="GltB"/>
</dbReference>
<dbReference type="InterPro" id="IPR002932">
    <property type="entry name" value="Glu_synthdom"/>
</dbReference>
<dbReference type="InterPro" id="IPR027283">
    <property type="entry name" value="YerD"/>
</dbReference>
<dbReference type="PANTHER" id="PTHR43819">
    <property type="entry name" value="ARCHAEAL-TYPE GLUTAMATE SYNTHASE [NADPH]"/>
    <property type="match status" value="1"/>
</dbReference>
<dbReference type="PANTHER" id="PTHR43819:SF1">
    <property type="entry name" value="ARCHAEAL-TYPE GLUTAMATE SYNTHASE [NADPH]"/>
    <property type="match status" value="1"/>
</dbReference>
<dbReference type="Pfam" id="PF01645">
    <property type="entry name" value="Glu_synthase"/>
    <property type="match status" value="1"/>
</dbReference>
<dbReference type="PIRSF" id="PIRSF006429">
    <property type="entry name" value="GOGAT_lg_2"/>
    <property type="match status" value="1"/>
</dbReference>
<dbReference type="PIRSF" id="PIRSF500060">
    <property type="entry name" value="UCP500060"/>
    <property type="match status" value="1"/>
</dbReference>
<dbReference type="SUPFAM" id="SSF51395">
    <property type="entry name" value="FMN-linked oxidoreductases"/>
    <property type="match status" value="1"/>
</dbReference>
<name>YERD_BACSU</name>
<comment type="subcellular location">
    <subcellularLocation>
        <location evidence="2">Cell membrane</location>
        <topology evidence="2">Single-pass membrane protein</topology>
    </subcellularLocation>
</comment>
<comment type="similarity">
    <text evidence="2">Belongs to the glutamate synthase family.</text>
</comment>
<feature type="chain" id="PRO_0000388342" description="Glutamate synthase large subunit-like protein YerD">
    <location>
        <begin position="1"/>
        <end position="525"/>
    </location>
</feature>
<feature type="transmembrane region" description="Helical" evidence="1">
    <location>
        <begin position="4"/>
        <end position="24"/>
    </location>
</feature>
<gene>
    <name type="primary">yerD</name>
    <name type="synonym">yecE</name>
    <name type="ordered locus">BSU06590</name>
</gene>
<evidence type="ECO:0000255" key="1"/>
<evidence type="ECO:0000305" key="2"/>
<organism>
    <name type="scientific">Bacillus subtilis (strain 168)</name>
    <dbReference type="NCBI Taxonomy" id="224308"/>
    <lineage>
        <taxon>Bacteria</taxon>
        <taxon>Bacillati</taxon>
        <taxon>Bacillota</taxon>
        <taxon>Bacilli</taxon>
        <taxon>Bacillales</taxon>
        <taxon>Bacillaceae</taxon>
        <taxon>Bacillus</taxon>
    </lineage>
</organism>